<evidence type="ECO:0000250" key="1"/>
<evidence type="ECO:0000250" key="2">
    <source>
        <dbReference type="UniProtKB" id="P00558"/>
    </source>
</evidence>
<evidence type="ECO:0000250" key="3">
    <source>
        <dbReference type="UniProtKB" id="P09041"/>
    </source>
</evidence>
<evidence type="ECO:0000250" key="4">
    <source>
        <dbReference type="UniProtKB" id="Q7SIB7"/>
    </source>
</evidence>
<evidence type="ECO:0000255" key="5"/>
<evidence type="ECO:0000269" key="6">
    <source>
    </source>
</evidence>
<evidence type="ECO:0000305" key="7"/>
<evidence type="ECO:0000312" key="8">
    <source>
        <dbReference type="EMBL" id="AAR89550.1"/>
    </source>
</evidence>
<feature type="initiator methionine" description="Removed" evidence="2">
    <location>
        <position position="1"/>
    </location>
</feature>
<feature type="chain" id="PRO_0000145838" description="Phosphoglycerate kinase 2">
    <location>
        <begin position="2"/>
        <end position="417"/>
    </location>
</feature>
<feature type="binding site" evidence="2">
    <location>
        <position position="23"/>
    </location>
    <ligand>
        <name>(2R)-3-phosphoglycerate</name>
        <dbReference type="ChEBI" id="CHEBI:58272"/>
    </ligand>
</feature>
<feature type="binding site" evidence="3">
    <location>
        <position position="24"/>
    </location>
    <ligand>
        <name>(2R)-3-phosphoglycerate</name>
        <dbReference type="ChEBI" id="CHEBI:58272"/>
    </ligand>
</feature>
<feature type="binding site" evidence="2">
    <location>
        <position position="25"/>
    </location>
    <ligand>
        <name>(2R)-3-phosphoglycerate</name>
        <dbReference type="ChEBI" id="CHEBI:58272"/>
    </ligand>
</feature>
<feature type="binding site" evidence="3">
    <location>
        <position position="26"/>
    </location>
    <ligand>
        <name>(2R)-3-phosphoglycerate</name>
        <dbReference type="ChEBI" id="CHEBI:58272"/>
    </ligand>
</feature>
<feature type="binding site" evidence="2">
    <location>
        <position position="38"/>
    </location>
    <ligand>
        <name>(2R)-3-phosphoglycerate</name>
        <dbReference type="ChEBI" id="CHEBI:58272"/>
    </ligand>
</feature>
<feature type="binding site" evidence="3">
    <location>
        <position position="39"/>
    </location>
    <ligand>
        <name>(2R)-3-phosphoglycerate</name>
        <dbReference type="ChEBI" id="CHEBI:58272"/>
    </ligand>
</feature>
<feature type="binding site" evidence="2">
    <location>
        <position position="62"/>
    </location>
    <ligand>
        <name>(2R)-3-phosphoglycerate</name>
        <dbReference type="ChEBI" id="CHEBI:58272"/>
    </ligand>
</feature>
<feature type="binding site" evidence="3">
    <location>
        <position position="63"/>
    </location>
    <ligand>
        <name>(2R)-3-phosphoglycerate</name>
        <dbReference type="ChEBI" id="CHEBI:58272"/>
    </ligand>
</feature>
<feature type="binding site" evidence="2">
    <location>
        <position position="65"/>
    </location>
    <ligand>
        <name>(2R)-3-phosphoglycerate</name>
        <dbReference type="ChEBI" id="CHEBI:58272"/>
    </ligand>
</feature>
<feature type="binding site" evidence="3">
    <location>
        <position position="66"/>
    </location>
    <ligand>
        <name>(2R)-3-phosphoglycerate</name>
        <dbReference type="ChEBI" id="CHEBI:58272"/>
    </ligand>
</feature>
<feature type="binding site" evidence="2">
    <location>
        <position position="122"/>
    </location>
    <ligand>
        <name>(2R)-3-phosphoglycerate</name>
        <dbReference type="ChEBI" id="CHEBI:58272"/>
    </ligand>
</feature>
<feature type="binding site" evidence="3">
    <location>
        <position position="123"/>
    </location>
    <ligand>
        <name>(2R)-3-phosphoglycerate</name>
        <dbReference type="ChEBI" id="CHEBI:58272"/>
    </ligand>
</feature>
<feature type="binding site" evidence="2">
    <location>
        <position position="170"/>
    </location>
    <ligand>
        <name>(2R)-3-phosphoglycerate</name>
        <dbReference type="ChEBI" id="CHEBI:58272"/>
    </ligand>
</feature>
<feature type="binding site" evidence="3">
    <location>
        <position position="171"/>
    </location>
    <ligand>
        <name>(2R)-3-phosphoglycerate</name>
        <dbReference type="ChEBI" id="CHEBI:58272"/>
    </ligand>
</feature>
<feature type="binding site" evidence="2">
    <location>
        <position position="214"/>
    </location>
    <ligand>
        <name>ADP</name>
        <dbReference type="ChEBI" id="CHEBI:456216"/>
    </ligand>
</feature>
<feature type="binding site" evidence="2">
    <location>
        <position position="214"/>
    </location>
    <ligand>
        <name>CDP</name>
        <dbReference type="ChEBI" id="CHEBI:58069"/>
    </ligand>
</feature>
<feature type="binding site" evidence="4">
    <location>
        <position position="215"/>
    </location>
    <ligand>
        <name>AMP</name>
        <dbReference type="ChEBI" id="CHEBI:456215"/>
    </ligand>
</feature>
<feature type="binding site" evidence="3">
    <location>
        <position position="215"/>
    </location>
    <ligand>
        <name>ATP</name>
        <dbReference type="ChEBI" id="CHEBI:30616"/>
    </ligand>
</feature>
<feature type="binding site" evidence="2">
    <location>
        <position position="215"/>
    </location>
    <ligand>
        <name>Mg(2+)</name>
        <dbReference type="ChEBI" id="CHEBI:18420"/>
    </ligand>
</feature>
<feature type="binding site" evidence="4">
    <location>
        <position position="216"/>
    </location>
    <ligand>
        <name>AMP</name>
        <dbReference type="ChEBI" id="CHEBI:456215"/>
    </ligand>
</feature>
<feature type="binding site" evidence="2">
    <location>
        <position position="218"/>
    </location>
    <ligand>
        <name>Mg(2+)</name>
        <dbReference type="ChEBI" id="CHEBI:18420"/>
    </ligand>
</feature>
<feature type="binding site" evidence="2">
    <location>
        <position position="219"/>
    </location>
    <ligand>
        <name>CDP</name>
        <dbReference type="ChEBI" id="CHEBI:58069"/>
    </ligand>
</feature>
<feature type="binding site" evidence="2">
    <location>
        <position position="219"/>
    </location>
    <ligand>
        <name>Mg(2+)</name>
        <dbReference type="ChEBI" id="CHEBI:18420"/>
    </ligand>
</feature>
<feature type="binding site" evidence="4">
    <location>
        <position position="220"/>
    </location>
    <ligand>
        <name>AMP</name>
        <dbReference type="ChEBI" id="CHEBI:456215"/>
    </ligand>
</feature>
<feature type="binding site" evidence="3">
    <location>
        <position position="220"/>
    </location>
    <ligand>
        <name>ATP</name>
        <dbReference type="ChEBI" id="CHEBI:30616"/>
    </ligand>
</feature>
<feature type="binding site" evidence="2">
    <location>
        <position position="238"/>
    </location>
    <ligand>
        <name>ADP</name>
        <dbReference type="ChEBI" id="CHEBI:456216"/>
    </ligand>
</feature>
<feature type="binding site" evidence="2">
    <location>
        <position position="238"/>
    </location>
    <ligand>
        <name>CDP</name>
        <dbReference type="ChEBI" id="CHEBI:58069"/>
    </ligand>
</feature>
<feature type="binding site" evidence="4">
    <location>
        <position position="239"/>
    </location>
    <ligand>
        <name>AMP</name>
        <dbReference type="ChEBI" id="CHEBI:456215"/>
    </ligand>
</feature>
<feature type="binding site" evidence="3">
    <location>
        <position position="239"/>
    </location>
    <ligand>
        <name>ATP</name>
        <dbReference type="ChEBI" id="CHEBI:30616"/>
    </ligand>
</feature>
<feature type="binding site" evidence="4">
    <location>
        <position position="313"/>
    </location>
    <ligand>
        <name>AMP</name>
        <dbReference type="ChEBI" id="CHEBI:456215"/>
    </ligand>
</feature>
<feature type="binding site" evidence="3">
    <location>
        <position position="313"/>
    </location>
    <ligand>
        <name>ATP</name>
        <dbReference type="ChEBI" id="CHEBI:30616"/>
    </ligand>
</feature>
<feature type="binding site" evidence="2">
    <location>
        <position position="338"/>
    </location>
    <ligand>
        <name>CDP</name>
        <dbReference type="ChEBI" id="CHEBI:58069"/>
    </ligand>
</feature>
<feature type="binding site" evidence="2">
    <location>
        <position position="343"/>
    </location>
    <ligand>
        <name>ADP</name>
        <dbReference type="ChEBI" id="CHEBI:456216"/>
    </ligand>
</feature>
<feature type="binding site" evidence="2">
    <location>
        <position position="343"/>
    </location>
    <ligand>
        <name>CDP</name>
        <dbReference type="ChEBI" id="CHEBI:58069"/>
    </ligand>
</feature>
<feature type="binding site" evidence="4">
    <location>
        <position position="344"/>
    </location>
    <ligand>
        <name>AMP</name>
        <dbReference type="ChEBI" id="CHEBI:456215"/>
    </ligand>
</feature>
<feature type="binding site" evidence="3">
    <location>
        <position position="344"/>
    </location>
    <ligand>
        <name>ATP</name>
        <dbReference type="ChEBI" id="CHEBI:30616"/>
    </ligand>
</feature>
<feature type="binding site" evidence="3">
    <location>
        <position position="375"/>
    </location>
    <ligand>
        <name>ATP</name>
        <dbReference type="ChEBI" id="CHEBI:30616"/>
    </ligand>
</feature>
<feature type="binding site" evidence="4">
    <location>
        <position position="375"/>
    </location>
    <ligand>
        <name>Mg(2+)</name>
        <dbReference type="ChEBI" id="CHEBI:18420"/>
    </ligand>
</feature>
<feature type="binding site" evidence="4">
    <location>
        <position position="376"/>
    </location>
    <ligand>
        <name>ATP</name>
        <dbReference type="ChEBI" id="CHEBI:30616"/>
    </ligand>
</feature>
<feature type="modified residue" description="N-acetylserine" evidence="2">
    <location>
        <position position="2"/>
    </location>
</feature>
<feature type="modified residue" description="Phosphoserine" evidence="2">
    <location>
        <position position="2"/>
    </location>
</feature>
<feature type="modified residue" description="Phosphoserine" evidence="2">
    <location>
        <position position="4"/>
    </location>
</feature>
<feature type="modified residue" description="N6-acetyllysine" evidence="2">
    <location>
        <position position="11"/>
    </location>
</feature>
<feature type="modified residue" description="N6-acetyllysine" evidence="2">
    <location>
        <position position="75"/>
    </location>
</feature>
<feature type="modified residue" description="N6-acetyllysine" evidence="2">
    <location>
        <position position="86"/>
    </location>
</feature>
<feature type="modified residue" description="N6-acetyllysine" evidence="2">
    <location>
        <position position="97"/>
    </location>
</feature>
<feature type="modified residue" description="N6-acetyllysine" evidence="2">
    <location>
        <position position="131"/>
    </location>
</feature>
<feature type="modified residue" description="N6-acetyllysine" evidence="2">
    <location>
        <position position="146"/>
    </location>
</feature>
<feature type="modified residue" description="Phosphotyrosine" evidence="2">
    <location>
        <position position="196"/>
    </location>
</feature>
<feature type="modified residue" description="N6-acetyllysine" evidence="2">
    <location>
        <position position="199"/>
    </location>
</feature>
<feature type="modified residue" description="N6-acetyllysine" evidence="2">
    <location>
        <position position="267"/>
    </location>
</feature>
<feature type="modified residue" description="N6-acetyllysine" evidence="2">
    <location>
        <position position="291"/>
    </location>
</feature>
<feature type="sequence variant" description="In SNP-A; possible loss of CK2 phosphorylation site." evidence="6">
    <original>S</original>
    <variation>P</variation>
    <location>
        <position position="102"/>
    </location>
</feature>
<feature type="sequence variant" description="In SNP-B; increased semen volume in ejaculate." evidence="6">
    <original>T</original>
    <variation>K</variation>
    <location>
        <position position="264"/>
    </location>
</feature>
<feature type="sequence conflict" description="In Ref. 1; AAR89550." evidence="7" ref="1">
    <original>Y</original>
    <variation>N</variation>
    <location>
        <position position="324"/>
    </location>
</feature>
<protein>
    <recommendedName>
        <fullName>Phosphoglycerate kinase 2</fullName>
        <ecNumber evidence="3">2.7.2.3</ecNumber>
    </recommendedName>
    <alternativeName>
        <fullName>Phosphoglycerate kinase, testis specific</fullName>
    </alternativeName>
</protein>
<comment type="function">
    <text evidence="3">Essential for sperm motility and male fertility but is not required for the completion of spermatogenesis.</text>
</comment>
<comment type="catalytic activity">
    <reaction evidence="3">
        <text>(2R)-3-phosphoglycerate + ATP = (2R)-3-phospho-glyceroyl phosphate + ADP</text>
        <dbReference type="Rhea" id="RHEA:14801"/>
        <dbReference type="ChEBI" id="CHEBI:30616"/>
        <dbReference type="ChEBI" id="CHEBI:57604"/>
        <dbReference type="ChEBI" id="CHEBI:58272"/>
        <dbReference type="ChEBI" id="CHEBI:456216"/>
        <dbReference type="EC" id="2.7.2.3"/>
    </reaction>
</comment>
<comment type="cofactor">
    <cofactor evidence="2">
        <name>Mg(2+)</name>
        <dbReference type="ChEBI" id="CHEBI:18420"/>
    </cofactor>
</comment>
<comment type="pathway">
    <text>Carbohydrate degradation; glycolysis; pyruvate from D-glyceraldehyde 3-phosphate: step 2/5.</text>
</comment>
<comment type="subunit">
    <text evidence="3">Monomer.</text>
</comment>
<comment type="subcellular location">
    <subcellularLocation>
        <location evidence="1">Cytoplasm</location>
    </subcellularLocation>
</comment>
<comment type="tissue specificity">
    <text evidence="6">Testis specific.</text>
</comment>
<comment type="developmental stage">
    <text evidence="6">Expression is highest in the adult, lower in a 10 month old and very weak in an 8 week old.</text>
</comment>
<comment type="polymorphism">
    <text evidence="6">Contains at least 10 polymorphisms. Those that lead to amino acid substitutions may alter protein secondary structures and may influence male fertility.</text>
</comment>
<comment type="similarity">
    <text evidence="5">Belongs to the phosphoglycerate kinase family.</text>
</comment>
<sequence>MSLSKKLTLDKLDVKGKRVIMRVDFNVPMKRNQVTNNQRIKASLPSIRYCLDNGARSVVLMSHLGRPDGVAMPDKYSLEPVAAELKSLLGKDVLFLKDCVGSEAEQACANPPAGSVILLENLRFHVEEEGKGQDPSGNKLKAEPDKVEAFRASLSKLGDVYVNDAFGTAHRAHSSMVGVNLPQKASGFLMKKELDYFAKALENPERPFLAILGGAKVADKIQLIKNMLDKVNEMIIGGGMAFTFLKVLNNMEIGASLFDKEGATIVKEIMAKAEKNRVNITFPVDFVIADKFEENAKVGQATVASGIPAGWVALDCGPETNKKYAQVVARAKLIVWNGPLGVFEWDAFANGTKALMDEIVKATSKGCITIIGGGDTATCCAKWNTEDKVSHVSTGGGASLELLEGKVLPGVEALSNL</sequence>
<gene>
    <name evidence="8" type="primary">PGK2</name>
</gene>
<accession>Q6RI85</accession>
<accession>Q6RFZ5</accession>
<dbReference type="EC" id="2.7.2.3" evidence="3"/>
<dbReference type="EMBL" id="AY496962">
    <property type="protein sequence ID" value="AAR88362.1"/>
    <property type="molecule type" value="mRNA"/>
</dbReference>
<dbReference type="EMBL" id="AY500132">
    <property type="protein sequence ID" value="AAR89550.1"/>
    <property type="molecule type" value="Genomic_DNA"/>
</dbReference>
<dbReference type="RefSeq" id="NP_998947.1">
    <property type="nucleotide sequence ID" value="NM_213782.1"/>
</dbReference>
<dbReference type="SMR" id="Q6RI85"/>
<dbReference type="FunCoup" id="Q6RI85">
    <property type="interactions" value="336"/>
</dbReference>
<dbReference type="IntAct" id="Q6RI85">
    <property type="interactions" value="1"/>
</dbReference>
<dbReference type="STRING" id="9823.ENSSSCP00000045543"/>
<dbReference type="PeptideAtlas" id="Q6RI85"/>
<dbReference type="Ensembl" id="ENSSSCT00000001943.4">
    <property type="protein sequence ID" value="ENSSSCP00000045543.1"/>
    <property type="gene ID" value="ENSSSCG00000001738.4"/>
</dbReference>
<dbReference type="Ensembl" id="ENSSSCT00030039845.1">
    <property type="protein sequence ID" value="ENSSSCP00030018351.1"/>
    <property type="gene ID" value="ENSSSCG00030028466.1"/>
</dbReference>
<dbReference type="Ensembl" id="ENSSSCT00040037149.1">
    <property type="protein sequence ID" value="ENSSSCP00040015448.1"/>
    <property type="gene ID" value="ENSSSCG00040027666.1"/>
</dbReference>
<dbReference type="Ensembl" id="ENSSSCT00050004221.1">
    <property type="protein sequence ID" value="ENSSSCP00050001635.1"/>
    <property type="gene ID" value="ENSSSCG00050003199.1"/>
</dbReference>
<dbReference type="Ensembl" id="ENSSSCT00055011631.1">
    <property type="protein sequence ID" value="ENSSSCP00055009207.1"/>
    <property type="gene ID" value="ENSSSCG00055005986.1"/>
</dbReference>
<dbReference type="Ensembl" id="ENSSSCT00060065813.1">
    <property type="protein sequence ID" value="ENSSSCP00060028173.1"/>
    <property type="gene ID" value="ENSSSCG00060048462.1"/>
</dbReference>
<dbReference type="Ensembl" id="ENSSSCT00065007143.1">
    <property type="protein sequence ID" value="ENSSSCP00065003084.1"/>
    <property type="gene ID" value="ENSSSCG00065005263.1"/>
</dbReference>
<dbReference type="Ensembl" id="ENSSSCT00070040987.1">
    <property type="protein sequence ID" value="ENSSSCP00070034394.1"/>
    <property type="gene ID" value="ENSSSCG00070020628.1"/>
</dbReference>
<dbReference type="Ensembl" id="ENSSSCT00110047577">
    <property type="protein sequence ID" value="ENSSSCP00110033476"/>
    <property type="gene ID" value="ENSSSCG00110024663"/>
</dbReference>
<dbReference type="Ensembl" id="ENSSSCT00130054961">
    <property type="protein sequence ID" value="ENSSSCP00130039378"/>
    <property type="gene ID" value="ENSSSCG00130028162"/>
</dbReference>
<dbReference type="GeneID" id="396673"/>
<dbReference type="KEGG" id="ssc:396673"/>
<dbReference type="CTD" id="5232"/>
<dbReference type="VGNC" id="VGNC:91351">
    <property type="gene designation" value="PGK2"/>
</dbReference>
<dbReference type="GeneTree" id="ENSGT00390000008820"/>
<dbReference type="InParanoid" id="Q6RI85"/>
<dbReference type="OMA" id="GPETNKK"/>
<dbReference type="OrthoDB" id="275353at2759"/>
<dbReference type="BRENDA" id="2.7.2.3">
    <property type="organism ID" value="6170"/>
</dbReference>
<dbReference type="Reactome" id="R-SSC-70171">
    <property type="pathway name" value="Glycolysis"/>
</dbReference>
<dbReference type="Reactome" id="R-SSC-70263">
    <property type="pathway name" value="Gluconeogenesis"/>
</dbReference>
<dbReference type="UniPathway" id="UPA00109">
    <property type="reaction ID" value="UER00185"/>
</dbReference>
<dbReference type="Proteomes" id="UP000008227">
    <property type="component" value="Chromosome 7"/>
</dbReference>
<dbReference type="Proteomes" id="UP000314985">
    <property type="component" value="Chromosome 7"/>
</dbReference>
<dbReference type="Proteomes" id="UP000694570">
    <property type="component" value="Unplaced"/>
</dbReference>
<dbReference type="Proteomes" id="UP000694571">
    <property type="component" value="Unplaced"/>
</dbReference>
<dbReference type="Proteomes" id="UP000694720">
    <property type="component" value="Unplaced"/>
</dbReference>
<dbReference type="Proteomes" id="UP000694722">
    <property type="component" value="Unplaced"/>
</dbReference>
<dbReference type="Proteomes" id="UP000694723">
    <property type="component" value="Unplaced"/>
</dbReference>
<dbReference type="Proteomes" id="UP000694724">
    <property type="component" value="Unplaced"/>
</dbReference>
<dbReference type="Proteomes" id="UP000694725">
    <property type="component" value="Unplaced"/>
</dbReference>
<dbReference type="Proteomes" id="UP000694726">
    <property type="component" value="Unplaced"/>
</dbReference>
<dbReference type="Proteomes" id="UP000694727">
    <property type="component" value="Unplaced"/>
</dbReference>
<dbReference type="Proteomes" id="UP000694728">
    <property type="component" value="Unplaced"/>
</dbReference>
<dbReference type="Bgee" id="ENSSSCG00000001738">
    <property type="expression patterns" value="Expressed in testis and 4 other cell types or tissues"/>
</dbReference>
<dbReference type="ExpressionAtlas" id="Q6RI85">
    <property type="expression patterns" value="baseline and differential"/>
</dbReference>
<dbReference type="GO" id="GO:0005829">
    <property type="term" value="C:cytosol"/>
    <property type="evidence" value="ECO:0000318"/>
    <property type="project" value="GO_Central"/>
</dbReference>
<dbReference type="GO" id="GO:0035686">
    <property type="term" value="C:sperm fibrous sheath"/>
    <property type="evidence" value="ECO:0000318"/>
    <property type="project" value="GO_Central"/>
</dbReference>
<dbReference type="GO" id="GO:0043531">
    <property type="term" value="F:ADP binding"/>
    <property type="evidence" value="ECO:0000318"/>
    <property type="project" value="GO_Central"/>
</dbReference>
<dbReference type="GO" id="GO:0005524">
    <property type="term" value="F:ATP binding"/>
    <property type="evidence" value="ECO:0000250"/>
    <property type="project" value="UniProtKB"/>
</dbReference>
<dbReference type="GO" id="GO:0046872">
    <property type="term" value="F:metal ion binding"/>
    <property type="evidence" value="ECO:0007669"/>
    <property type="project" value="UniProtKB-KW"/>
</dbReference>
<dbReference type="GO" id="GO:0004618">
    <property type="term" value="F:phosphoglycerate kinase activity"/>
    <property type="evidence" value="ECO:0000250"/>
    <property type="project" value="UniProtKB"/>
</dbReference>
<dbReference type="GO" id="GO:0006094">
    <property type="term" value="P:gluconeogenesis"/>
    <property type="evidence" value="ECO:0000318"/>
    <property type="project" value="GO_Central"/>
</dbReference>
<dbReference type="GO" id="GO:0006096">
    <property type="term" value="P:glycolytic process"/>
    <property type="evidence" value="ECO:0000318"/>
    <property type="project" value="GO_Central"/>
</dbReference>
<dbReference type="CDD" id="cd00318">
    <property type="entry name" value="Phosphoglycerate_kinase"/>
    <property type="match status" value="1"/>
</dbReference>
<dbReference type="FunFam" id="3.40.50.1260:FF:000019">
    <property type="entry name" value="Phosphoglycerate kinase 1"/>
    <property type="match status" value="1"/>
</dbReference>
<dbReference type="FunFam" id="3.40.50.1260:FF:000031">
    <property type="entry name" value="Phosphoglycerate kinase 1"/>
    <property type="match status" value="1"/>
</dbReference>
<dbReference type="Gene3D" id="3.40.50.1260">
    <property type="entry name" value="Phosphoglycerate kinase, N-terminal domain"/>
    <property type="match status" value="3"/>
</dbReference>
<dbReference type="HAMAP" id="MF_00145">
    <property type="entry name" value="Phosphoglyc_kinase"/>
    <property type="match status" value="1"/>
</dbReference>
<dbReference type="InterPro" id="IPR001576">
    <property type="entry name" value="Phosphoglycerate_kinase"/>
</dbReference>
<dbReference type="InterPro" id="IPR015911">
    <property type="entry name" value="Phosphoglycerate_kinase_CS"/>
</dbReference>
<dbReference type="InterPro" id="IPR015824">
    <property type="entry name" value="Phosphoglycerate_kinase_N"/>
</dbReference>
<dbReference type="InterPro" id="IPR036043">
    <property type="entry name" value="Phosphoglycerate_kinase_sf"/>
</dbReference>
<dbReference type="PANTHER" id="PTHR11406">
    <property type="entry name" value="PHOSPHOGLYCERATE KINASE"/>
    <property type="match status" value="1"/>
</dbReference>
<dbReference type="PANTHER" id="PTHR11406:SF10">
    <property type="entry name" value="PHOSPHOGLYCERATE KINASE 2"/>
    <property type="match status" value="1"/>
</dbReference>
<dbReference type="Pfam" id="PF00162">
    <property type="entry name" value="PGK"/>
    <property type="match status" value="1"/>
</dbReference>
<dbReference type="PIRSF" id="PIRSF000724">
    <property type="entry name" value="Pgk"/>
    <property type="match status" value="1"/>
</dbReference>
<dbReference type="PRINTS" id="PR00477">
    <property type="entry name" value="PHGLYCKINASE"/>
</dbReference>
<dbReference type="SUPFAM" id="SSF53748">
    <property type="entry name" value="Phosphoglycerate kinase"/>
    <property type="match status" value="1"/>
</dbReference>
<dbReference type="PROSITE" id="PS00111">
    <property type="entry name" value="PGLYCERATE_KINASE"/>
    <property type="match status" value="1"/>
</dbReference>
<reference evidence="7 8" key="1">
    <citation type="journal article" date="2004" name="Mamm. Genome">
        <title>Molecular characterization of the porcine testis-specific phosphoglycerate kinase 2 (PGK2) gene and its association with male fertility.</title>
        <authorList>
            <person name="Chen K."/>
            <person name="Knorr C."/>
            <person name="Moser G."/>
            <person name="Gatphayak K."/>
            <person name="Brenig B."/>
        </authorList>
    </citation>
    <scope>NUCLEOTIDE SEQUENCE [GENOMIC DNA / MRNA]</scope>
    <scope>TISSUE SPECIFICITY</scope>
    <scope>DEVELOPMENTAL STAGE</scope>
    <scope>VARIANTS PRO-102 AND LYS-264</scope>
</reference>
<proteinExistence type="evidence at transcript level"/>
<organism>
    <name type="scientific">Sus scrofa</name>
    <name type="common">Pig</name>
    <dbReference type="NCBI Taxonomy" id="9823"/>
    <lineage>
        <taxon>Eukaryota</taxon>
        <taxon>Metazoa</taxon>
        <taxon>Chordata</taxon>
        <taxon>Craniata</taxon>
        <taxon>Vertebrata</taxon>
        <taxon>Euteleostomi</taxon>
        <taxon>Mammalia</taxon>
        <taxon>Eutheria</taxon>
        <taxon>Laurasiatheria</taxon>
        <taxon>Artiodactyla</taxon>
        <taxon>Suina</taxon>
        <taxon>Suidae</taxon>
        <taxon>Sus</taxon>
    </lineage>
</organism>
<name>PGK2_PIG</name>
<keyword id="KW-0007">Acetylation</keyword>
<keyword id="KW-0067">ATP-binding</keyword>
<keyword id="KW-0963">Cytoplasm</keyword>
<keyword id="KW-0324">Glycolysis</keyword>
<keyword id="KW-0418">Kinase</keyword>
<keyword id="KW-0460">Magnesium</keyword>
<keyword id="KW-0479">Metal-binding</keyword>
<keyword id="KW-0547">Nucleotide-binding</keyword>
<keyword id="KW-0597">Phosphoprotein</keyword>
<keyword id="KW-1185">Reference proteome</keyword>
<keyword id="KW-0808">Transferase</keyword>